<reference key="1">
    <citation type="journal article" date="2000" name="Genomics">
        <title>EHD2, EHD3, and EHD4 encode novel members of a highly conserved family of EH domain-containing proteins.</title>
        <authorList>
            <person name="Pohl U."/>
            <person name="Smith J.S."/>
            <person name="Tachibana I."/>
            <person name="Ueki K."/>
            <person name="Lee H.K."/>
            <person name="Ramaswamy S."/>
            <person name="Wu Q."/>
            <person name="Mohrenweiser H.W."/>
            <person name="Jenkins R.B."/>
            <person name="Louis D.N."/>
        </authorList>
    </citation>
    <scope>NUCLEOTIDE SEQUENCE [MRNA] (ISOFORM 1)</scope>
    <scope>TISSUE SPECIFICITY</scope>
    <source>
        <tissue>Fetal brain</tissue>
    </source>
</reference>
<reference key="2">
    <citation type="submission" date="2001-12" db="EMBL/GenBank/DDBJ databases">
        <title>hEHD2, an EH domain containing protein-2.</title>
        <authorList>
            <person name="Benjamin S."/>
            <person name="Horowitz M."/>
        </authorList>
    </citation>
    <scope>NUCLEOTIDE SEQUENCE [MRNA] (ISOFORM 1)</scope>
</reference>
<reference key="3">
    <citation type="journal article" date="2004" name="Nat. Genet.">
        <title>Complete sequencing and characterization of 21,243 full-length human cDNAs.</title>
        <authorList>
            <person name="Ota T."/>
            <person name="Suzuki Y."/>
            <person name="Nishikawa T."/>
            <person name="Otsuki T."/>
            <person name="Sugiyama T."/>
            <person name="Irie R."/>
            <person name="Wakamatsu A."/>
            <person name="Hayashi K."/>
            <person name="Sato H."/>
            <person name="Nagai K."/>
            <person name="Kimura K."/>
            <person name="Makita H."/>
            <person name="Sekine M."/>
            <person name="Obayashi M."/>
            <person name="Nishi T."/>
            <person name="Shibahara T."/>
            <person name="Tanaka T."/>
            <person name="Ishii S."/>
            <person name="Yamamoto J."/>
            <person name="Saito K."/>
            <person name="Kawai Y."/>
            <person name="Isono Y."/>
            <person name="Nakamura Y."/>
            <person name="Nagahari K."/>
            <person name="Murakami K."/>
            <person name="Yasuda T."/>
            <person name="Iwayanagi T."/>
            <person name="Wagatsuma M."/>
            <person name="Shiratori A."/>
            <person name="Sudo H."/>
            <person name="Hosoiri T."/>
            <person name="Kaku Y."/>
            <person name="Kodaira H."/>
            <person name="Kondo H."/>
            <person name="Sugawara M."/>
            <person name="Takahashi M."/>
            <person name="Kanda K."/>
            <person name="Yokoi T."/>
            <person name="Furuya T."/>
            <person name="Kikkawa E."/>
            <person name="Omura Y."/>
            <person name="Abe K."/>
            <person name="Kamihara K."/>
            <person name="Katsuta N."/>
            <person name="Sato K."/>
            <person name="Tanikawa M."/>
            <person name="Yamazaki M."/>
            <person name="Ninomiya K."/>
            <person name="Ishibashi T."/>
            <person name="Yamashita H."/>
            <person name="Murakawa K."/>
            <person name="Fujimori K."/>
            <person name="Tanai H."/>
            <person name="Kimata M."/>
            <person name="Watanabe M."/>
            <person name="Hiraoka S."/>
            <person name="Chiba Y."/>
            <person name="Ishida S."/>
            <person name="Ono Y."/>
            <person name="Takiguchi S."/>
            <person name="Watanabe S."/>
            <person name="Yosida M."/>
            <person name="Hotuta T."/>
            <person name="Kusano J."/>
            <person name="Kanehori K."/>
            <person name="Takahashi-Fujii A."/>
            <person name="Hara H."/>
            <person name="Tanase T.-O."/>
            <person name="Nomura Y."/>
            <person name="Togiya S."/>
            <person name="Komai F."/>
            <person name="Hara R."/>
            <person name="Takeuchi K."/>
            <person name="Arita M."/>
            <person name="Imose N."/>
            <person name="Musashino K."/>
            <person name="Yuuki H."/>
            <person name="Oshima A."/>
            <person name="Sasaki N."/>
            <person name="Aotsuka S."/>
            <person name="Yoshikawa Y."/>
            <person name="Matsunawa H."/>
            <person name="Ichihara T."/>
            <person name="Shiohata N."/>
            <person name="Sano S."/>
            <person name="Moriya S."/>
            <person name="Momiyama H."/>
            <person name="Satoh N."/>
            <person name="Takami S."/>
            <person name="Terashima Y."/>
            <person name="Suzuki O."/>
            <person name="Nakagawa S."/>
            <person name="Senoh A."/>
            <person name="Mizoguchi H."/>
            <person name="Goto Y."/>
            <person name="Shimizu F."/>
            <person name="Wakebe H."/>
            <person name="Hishigaki H."/>
            <person name="Watanabe T."/>
            <person name="Sugiyama A."/>
            <person name="Takemoto M."/>
            <person name="Kawakami B."/>
            <person name="Yamazaki M."/>
            <person name="Watanabe K."/>
            <person name="Kumagai A."/>
            <person name="Itakura S."/>
            <person name="Fukuzumi Y."/>
            <person name="Fujimori Y."/>
            <person name="Komiyama M."/>
            <person name="Tashiro H."/>
            <person name="Tanigami A."/>
            <person name="Fujiwara T."/>
            <person name="Ono T."/>
            <person name="Yamada K."/>
            <person name="Fujii Y."/>
            <person name="Ozaki K."/>
            <person name="Hirao M."/>
            <person name="Ohmori Y."/>
            <person name="Kawabata A."/>
            <person name="Hikiji T."/>
            <person name="Kobatake N."/>
            <person name="Inagaki H."/>
            <person name="Ikema Y."/>
            <person name="Okamoto S."/>
            <person name="Okitani R."/>
            <person name="Kawakami T."/>
            <person name="Noguchi S."/>
            <person name="Itoh T."/>
            <person name="Shigeta K."/>
            <person name="Senba T."/>
            <person name="Matsumura K."/>
            <person name="Nakajima Y."/>
            <person name="Mizuno T."/>
            <person name="Morinaga M."/>
            <person name="Sasaki M."/>
            <person name="Togashi T."/>
            <person name="Oyama M."/>
            <person name="Hata H."/>
            <person name="Watanabe M."/>
            <person name="Komatsu T."/>
            <person name="Mizushima-Sugano J."/>
            <person name="Satoh T."/>
            <person name="Shirai Y."/>
            <person name="Takahashi Y."/>
            <person name="Nakagawa K."/>
            <person name="Okumura K."/>
            <person name="Nagase T."/>
            <person name="Nomura N."/>
            <person name="Kikuchi H."/>
            <person name="Masuho Y."/>
            <person name="Yamashita R."/>
            <person name="Nakai K."/>
            <person name="Yada T."/>
            <person name="Nakamura Y."/>
            <person name="Ohara O."/>
            <person name="Isogai T."/>
            <person name="Sugano S."/>
        </authorList>
    </citation>
    <scope>NUCLEOTIDE SEQUENCE [LARGE SCALE MRNA] (ISOFORMS 1 AND 2)</scope>
    <source>
        <tissue>Lung</tissue>
        <tissue>Placenta</tissue>
    </source>
</reference>
<reference key="4">
    <citation type="journal article" date="2004" name="Nature">
        <title>The DNA sequence and biology of human chromosome 19.</title>
        <authorList>
            <person name="Grimwood J."/>
            <person name="Gordon L.A."/>
            <person name="Olsen A.S."/>
            <person name="Terry A."/>
            <person name="Schmutz J."/>
            <person name="Lamerdin J.E."/>
            <person name="Hellsten U."/>
            <person name="Goodstein D."/>
            <person name="Couronne O."/>
            <person name="Tran-Gyamfi M."/>
            <person name="Aerts A."/>
            <person name="Altherr M."/>
            <person name="Ashworth L."/>
            <person name="Bajorek E."/>
            <person name="Black S."/>
            <person name="Branscomb E."/>
            <person name="Caenepeel S."/>
            <person name="Carrano A.V."/>
            <person name="Caoile C."/>
            <person name="Chan Y.M."/>
            <person name="Christensen M."/>
            <person name="Cleland C.A."/>
            <person name="Copeland A."/>
            <person name="Dalin E."/>
            <person name="Dehal P."/>
            <person name="Denys M."/>
            <person name="Detter J.C."/>
            <person name="Escobar J."/>
            <person name="Flowers D."/>
            <person name="Fotopulos D."/>
            <person name="Garcia C."/>
            <person name="Georgescu A.M."/>
            <person name="Glavina T."/>
            <person name="Gomez M."/>
            <person name="Gonzales E."/>
            <person name="Groza M."/>
            <person name="Hammon N."/>
            <person name="Hawkins T."/>
            <person name="Haydu L."/>
            <person name="Ho I."/>
            <person name="Huang W."/>
            <person name="Israni S."/>
            <person name="Jett J."/>
            <person name="Kadner K."/>
            <person name="Kimball H."/>
            <person name="Kobayashi A."/>
            <person name="Larionov V."/>
            <person name="Leem S.-H."/>
            <person name="Lopez F."/>
            <person name="Lou Y."/>
            <person name="Lowry S."/>
            <person name="Malfatti S."/>
            <person name="Martinez D."/>
            <person name="McCready P.M."/>
            <person name="Medina C."/>
            <person name="Morgan J."/>
            <person name="Nelson K."/>
            <person name="Nolan M."/>
            <person name="Ovcharenko I."/>
            <person name="Pitluck S."/>
            <person name="Pollard M."/>
            <person name="Popkie A.P."/>
            <person name="Predki P."/>
            <person name="Quan G."/>
            <person name="Ramirez L."/>
            <person name="Rash S."/>
            <person name="Retterer J."/>
            <person name="Rodriguez A."/>
            <person name="Rogers S."/>
            <person name="Salamov A."/>
            <person name="Salazar A."/>
            <person name="She X."/>
            <person name="Smith D."/>
            <person name="Slezak T."/>
            <person name="Solovyev V."/>
            <person name="Thayer N."/>
            <person name="Tice H."/>
            <person name="Tsai M."/>
            <person name="Ustaszewska A."/>
            <person name="Vo N."/>
            <person name="Wagner M."/>
            <person name="Wheeler J."/>
            <person name="Wu K."/>
            <person name="Xie G."/>
            <person name="Yang J."/>
            <person name="Dubchak I."/>
            <person name="Furey T.S."/>
            <person name="DeJong P."/>
            <person name="Dickson M."/>
            <person name="Gordon D."/>
            <person name="Eichler E.E."/>
            <person name="Pennacchio L.A."/>
            <person name="Richardson P."/>
            <person name="Stubbs L."/>
            <person name="Rokhsar D.S."/>
            <person name="Myers R.M."/>
            <person name="Rubin E.M."/>
            <person name="Lucas S.M."/>
        </authorList>
    </citation>
    <scope>NUCLEOTIDE SEQUENCE [LARGE SCALE GENOMIC DNA]</scope>
</reference>
<reference key="5">
    <citation type="submission" date="2005-07" db="EMBL/GenBank/DDBJ databases">
        <authorList>
            <person name="Mural R.J."/>
            <person name="Istrail S."/>
            <person name="Sutton G.G."/>
            <person name="Florea L."/>
            <person name="Halpern A.L."/>
            <person name="Mobarry C.M."/>
            <person name="Lippert R."/>
            <person name="Walenz B."/>
            <person name="Shatkay H."/>
            <person name="Dew I."/>
            <person name="Miller J.R."/>
            <person name="Flanigan M.J."/>
            <person name="Edwards N.J."/>
            <person name="Bolanos R."/>
            <person name="Fasulo D."/>
            <person name="Halldorsson B.V."/>
            <person name="Hannenhalli S."/>
            <person name="Turner R."/>
            <person name="Yooseph S."/>
            <person name="Lu F."/>
            <person name="Nusskern D.R."/>
            <person name="Shue B.C."/>
            <person name="Zheng X.H."/>
            <person name="Zhong F."/>
            <person name="Delcher A.L."/>
            <person name="Huson D.H."/>
            <person name="Kravitz S.A."/>
            <person name="Mouchard L."/>
            <person name="Reinert K."/>
            <person name="Remington K.A."/>
            <person name="Clark A.G."/>
            <person name="Waterman M.S."/>
            <person name="Eichler E.E."/>
            <person name="Adams M.D."/>
            <person name="Hunkapiller M.W."/>
            <person name="Myers E.W."/>
            <person name="Venter J.C."/>
        </authorList>
    </citation>
    <scope>NUCLEOTIDE SEQUENCE [LARGE SCALE GENOMIC DNA]</scope>
</reference>
<reference key="6">
    <citation type="journal article" date="2004" name="Genome Res.">
        <title>The status, quality, and expansion of the NIH full-length cDNA project: the Mammalian Gene Collection (MGC).</title>
        <authorList>
            <consortium name="The MGC Project Team"/>
        </authorList>
    </citation>
    <scope>NUCLEOTIDE SEQUENCE [LARGE SCALE MRNA] (ISOFORM 1)</scope>
    <source>
        <tissue>Pancreas</tissue>
    </source>
</reference>
<reference key="7">
    <citation type="journal article" date="2004" name="Biochem. J.">
        <title>Vectorial proteomics reveal targeting, phosphorylation and specific fragmentation of polymerase I and transcript release factor (PTRF) at the surface of caveolae in human adipocytes.</title>
        <authorList>
            <person name="Aboulaich N."/>
            <person name="Vainonen J.P."/>
            <person name="Stralfors P."/>
            <person name="Vener A.V."/>
        </authorList>
    </citation>
    <scope>PROTEIN SEQUENCE OF 33-41; 168-176; 270-280 AND 342-358</scope>
    <source>
        <tissue>Adipocyte</tissue>
    </source>
</reference>
<reference key="8">
    <citation type="journal article" date="2006" name="Cell">
        <title>Global, in vivo, and site-specific phosphorylation dynamics in signaling networks.</title>
        <authorList>
            <person name="Olsen J.V."/>
            <person name="Blagoev B."/>
            <person name="Gnad F."/>
            <person name="Macek B."/>
            <person name="Kumar C."/>
            <person name="Mortensen P."/>
            <person name="Mann M."/>
        </authorList>
    </citation>
    <scope>PHOSPHORYLATION [LARGE SCALE ANALYSIS] AT SER-438</scope>
    <scope>IDENTIFICATION BY MASS SPECTROMETRY [LARGE SCALE ANALYSIS]</scope>
    <source>
        <tissue>Cervix carcinoma</tissue>
    </source>
</reference>
<reference key="9">
    <citation type="journal article" date="2007" name="BMC Cell Biol.">
        <title>Shared as well as distinct roles of EHD proteins revealed by biochemical and functional comparisons in mammalian cells and C. elegans.</title>
        <authorList>
            <person name="George M."/>
            <person name="Ying G."/>
            <person name="Rainey M.A."/>
            <person name="Solomon A."/>
            <person name="Parikh P.T."/>
            <person name="Gao Q."/>
            <person name="Band V."/>
            <person name="Band H."/>
        </authorList>
    </citation>
    <scope>FUNCTION</scope>
    <scope>SUBCELLULAR LOCATION</scope>
    <scope>SUBUNIT</scope>
</reference>
<reference key="10">
    <citation type="journal article" date="2008" name="J. Biol. Chem.">
        <title>The endocytic recycling protein EHD2 interacts with myoferlin to regulate myoblast fusion.</title>
        <authorList>
            <person name="Doherty K.R."/>
            <person name="Demonbreun A.R."/>
            <person name="Wallace G.Q."/>
            <person name="Cave A."/>
            <person name="Posey A.D."/>
            <person name="Heretis K."/>
            <person name="Pytel P."/>
            <person name="McNally E.M."/>
        </authorList>
    </citation>
    <scope>INTERACTION WITH MYOF</scope>
</reference>
<reference key="11">
    <citation type="journal article" date="2008" name="Proc. Natl. Acad. Sci. U.S.A.">
        <title>A quantitative atlas of mitotic phosphorylation.</title>
        <authorList>
            <person name="Dephoure N."/>
            <person name="Zhou C."/>
            <person name="Villen J."/>
            <person name="Beausoleil S.A."/>
            <person name="Bakalarski C.E."/>
            <person name="Elledge S.J."/>
            <person name="Gygi S.P."/>
        </authorList>
    </citation>
    <scope>PHOSPHORYLATION [LARGE SCALE ANALYSIS] AT SER-438 AND SER-468</scope>
    <scope>IDENTIFICATION BY MASS SPECTROMETRY [LARGE SCALE ANALYSIS]</scope>
    <source>
        <tissue>Cervix carcinoma</tissue>
    </source>
</reference>
<reference key="12">
    <citation type="journal article" date="2008" name="Proteomics">
        <title>Large-scale phosphoproteome analysis of human liver tissue by enrichment and fractionation of phosphopeptides with strong anion exchange chromatography.</title>
        <authorList>
            <person name="Han G."/>
            <person name="Ye M."/>
            <person name="Zhou H."/>
            <person name="Jiang X."/>
            <person name="Feng S."/>
            <person name="Jiang X."/>
            <person name="Tian R."/>
            <person name="Wan D."/>
            <person name="Zou H."/>
            <person name="Gu J."/>
        </authorList>
    </citation>
    <scope>PHOSPHORYLATION [LARGE SCALE ANALYSIS] AT SER-438</scope>
    <scope>IDENTIFICATION BY MASS SPECTROMETRY [LARGE SCALE ANALYSIS]</scope>
    <source>
        <tissue>Liver</tissue>
    </source>
</reference>
<reference key="13">
    <citation type="journal article" date="2011" name="BMC Syst. Biol.">
        <title>Initial characterization of the human central proteome.</title>
        <authorList>
            <person name="Burkard T.R."/>
            <person name="Planyavsky M."/>
            <person name="Kaupe I."/>
            <person name="Breitwieser F.P."/>
            <person name="Buerckstuemmer T."/>
            <person name="Bennett K.L."/>
            <person name="Superti-Furga G."/>
            <person name="Colinge J."/>
        </authorList>
    </citation>
    <scope>IDENTIFICATION BY MASS SPECTROMETRY [LARGE SCALE ANALYSIS]</scope>
</reference>
<reference key="14">
    <citation type="journal article" date="2011" name="Sci. Signal.">
        <title>System-wide temporal characterization of the proteome and phosphoproteome of human embryonic stem cell differentiation.</title>
        <authorList>
            <person name="Rigbolt K.T."/>
            <person name="Prokhorova T.A."/>
            <person name="Akimov V."/>
            <person name="Henningsen J."/>
            <person name="Johansen P.T."/>
            <person name="Kratchmarova I."/>
            <person name="Kassem M."/>
            <person name="Mann M."/>
            <person name="Olsen J.V."/>
            <person name="Blagoev B."/>
        </authorList>
    </citation>
    <scope>IDENTIFICATION BY MASS SPECTROMETRY [LARGE SCALE ANALYSIS]</scope>
</reference>
<reference key="15">
    <citation type="journal article" date="2012" name="Mol. Biol. Cell">
        <title>EHD2 regulates caveolar dynamics via ATP-driven targeting and oligomerization.</title>
        <authorList>
            <person name="Moren B."/>
            <person name="Shah C."/>
            <person name="Howes M.T."/>
            <person name="Schieber N.L."/>
            <person name="McMahon H.T."/>
            <person name="Parton R.G."/>
            <person name="Daumke O."/>
            <person name="Lundmark R."/>
        </authorList>
    </citation>
    <scope>INTERACTION WITH PACSIN2</scope>
    <scope>SUBCELLULAR LOCATION</scope>
    <scope>MUTAGENESIS OF THR-72; THR-94; LYS-120; PHE-122; PHE-128; HIS-192 AND LYS-193</scope>
</reference>
<reference key="16">
    <citation type="journal article" date="2013" name="J. Proteome Res.">
        <title>Toward a comprehensive characterization of a human cancer cell phosphoproteome.</title>
        <authorList>
            <person name="Zhou H."/>
            <person name="Di Palma S."/>
            <person name="Preisinger C."/>
            <person name="Peng M."/>
            <person name="Polat A.N."/>
            <person name="Heck A.J."/>
            <person name="Mohammed S."/>
        </authorList>
    </citation>
    <scope>PHOSPHORYLATION [LARGE SCALE ANALYSIS] AT SER-438; SER-468; SER-470 AND SER-484</scope>
    <scope>IDENTIFICATION BY MASS SPECTROMETRY [LARGE SCALE ANALYSIS]</scope>
    <source>
        <tissue>Cervix carcinoma</tissue>
        <tissue>Erythroleukemia</tissue>
    </source>
</reference>
<reference key="17">
    <citation type="journal article" date="2014" name="J. Proteomics">
        <title>An enzyme assisted RP-RPLC approach for in-depth analysis of human liver phosphoproteome.</title>
        <authorList>
            <person name="Bian Y."/>
            <person name="Song C."/>
            <person name="Cheng K."/>
            <person name="Dong M."/>
            <person name="Wang F."/>
            <person name="Huang J."/>
            <person name="Sun D."/>
            <person name="Wang L."/>
            <person name="Ye M."/>
            <person name="Zou H."/>
        </authorList>
    </citation>
    <scope>PHOSPHORYLATION [LARGE SCALE ANALYSIS] AT SER-438</scope>
    <scope>IDENTIFICATION BY MASS SPECTROMETRY [LARGE SCALE ANALYSIS]</scope>
    <source>
        <tissue>Liver</tissue>
    </source>
</reference>
<reference key="18">
    <citation type="journal article" date="2015" name="J. Cell Sci.">
        <title>Cavin3 interacts with cavin1 and caveolin1 to increase surface dynamics of caveolae.</title>
        <authorList>
            <person name="Mohan J."/>
            <person name="Moren B."/>
            <person name="Larsson E."/>
            <person name="Holst M.R."/>
            <person name="Lundmark R."/>
        </authorList>
    </citation>
    <scope>FUNCTION</scope>
    <scope>INTERACTION WITH CAV1</scope>
</reference>
<feature type="chain" id="PRO_0000146111" description="EH domain-containing protein 2">
    <location>
        <begin position="1"/>
        <end position="543"/>
    </location>
</feature>
<feature type="domain" description="Dynamin-type G" evidence="5">
    <location>
        <begin position="55"/>
        <end position="286"/>
    </location>
</feature>
<feature type="domain" description="EH" evidence="3">
    <location>
        <begin position="449"/>
        <end position="537"/>
    </location>
</feature>
<feature type="domain" description="EF-hand" evidence="4">
    <location>
        <begin position="481"/>
        <end position="516"/>
    </location>
</feature>
<feature type="region of interest" description="G1 motif" evidence="5">
    <location>
        <begin position="65"/>
        <end position="72"/>
    </location>
</feature>
<feature type="region of interest" description="G2 motif" evidence="5">
    <location>
        <begin position="91"/>
        <end position="92"/>
    </location>
</feature>
<feature type="region of interest" description="G3 motif" evidence="5">
    <location>
        <begin position="153"/>
        <end position="156"/>
    </location>
</feature>
<feature type="region of interest" description="G4 motif" evidence="5">
    <location>
        <begin position="219"/>
        <end position="222"/>
    </location>
</feature>
<feature type="region of interest" description="G5 motif" evidence="5">
    <location>
        <position position="243"/>
    </location>
</feature>
<feature type="region of interest" description="Mediates membrane-binding" evidence="2">
    <location>
        <begin position="320"/>
        <end position="340"/>
    </location>
</feature>
<feature type="region of interest" description="Disordered" evidence="6">
    <location>
        <begin position="523"/>
        <end position="543"/>
    </location>
</feature>
<feature type="short sequence motif" description="KPF loop; caveolar targeting" evidence="10">
    <location>
        <begin position="120"/>
        <end position="122"/>
    </location>
</feature>
<feature type="compositionally biased region" description="Basic residues" evidence="6">
    <location>
        <begin position="534"/>
        <end position="543"/>
    </location>
</feature>
<feature type="binding site" evidence="2">
    <location>
        <begin position="65"/>
        <end position="72"/>
    </location>
    <ligand>
        <name>ATP</name>
        <dbReference type="ChEBI" id="CHEBI:30616"/>
    </ligand>
</feature>
<feature type="binding site" evidence="2">
    <location>
        <position position="220"/>
    </location>
    <ligand>
        <name>ATP</name>
        <dbReference type="ChEBI" id="CHEBI:30616"/>
    </ligand>
</feature>
<feature type="binding site" evidence="2">
    <location>
        <position position="258"/>
    </location>
    <ligand>
        <name>ATP</name>
        <dbReference type="ChEBI" id="CHEBI:30616"/>
    </ligand>
</feature>
<feature type="binding site" evidence="4">
    <location>
        <position position="494"/>
    </location>
    <ligand>
        <name>Ca(2+)</name>
        <dbReference type="ChEBI" id="CHEBI:29108"/>
    </ligand>
</feature>
<feature type="binding site" evidence="4">
    <location>
        <position position="496"/>
    </location>
    <ligand>
        <name>Ca(2+)</name>
        <dbReference type="ChEBI" id="CHEBI:29108"/>
    </ligand>
</feature>
<feature type="binding site" evidence="4">
    <location>
        <position position="498"/>
    </location>
    <ligand>
        <name>Ca(2+)</name>
        <dbReference type="ChEBI" id="CHEBI:29108"/>
    </ligand>
</feature>
<feature type="binding site" evidence="4">
    <location>
        <position position="500"/>
    </location>
    <ligand>
        <name>Ca(2+)</name>
        <dbReference type="ChEBI" id="CHEBI:29108"/>
    </ligand>
</feature>
<feature type="binding site" evidence="4">
    <location>
        <position position="505"/>
    </location>
    <ligand>
        <name>Ca(2+)</name>
        <dbReference type="ChEBI" id="CHEBI:29108"/>
    </ligand>
</feature>
<feature type="modified residue" description="Phosphoserine" evidence="1">
    <location>
        <position position="3"/>
    </location>
</feature>
<feature type="modified residue" description="Phosphoserine" evidence="15 16 17 18 19">
    <location>
        <position position="438"/>
    </location>
</feature>
<feature type="modified residue" description="Phosphoserine" evidence="17 18">
    <location>
        <position position="468"/>
    </location>
</feature>
<feature type="modified residue" description="Phosphoserine" evidence="18">
    <location>
        <position position="470"/>
    </location>
</feature>
<feature type="modified residue" description="Phosphoserine" evidence="18">
    <location>
        <position position="484"/>
    </location>
</feature>
<feature type="modified residue" description="Phosphoserine" evidence="1">
    <location>
        <position position="493"/>
    </location>
</feature>
<feature type="splice variant" id="VSP_056212" description="In isoform 2." evidence="12">
    <location>
        <begin position="1"/>
        <end position="136"/>
    </location>
</feature>
<feature type="sequence variant" id="VAR_033917" description="In dbSNP:rs34140460.">
    <original>G</original>
    <variation>S</variation>
    <location>
        <position position="57"/>
    </location>
</feature>
<feature type="mutagenesis site" description="Incapable of binding membranes and localizing to caveolae." evidence="10">
    <original>T</original>
    <variation>A</variation>
    <location>
        <position position="72"/>
    </location>
</feature>
<feature type="mutagenesis site" description="Lowers the level of CAV1; distorded caveolae." evidence="10">
    <original>T</original>
    <variation>A</variation>
    <location>
        <position position="94"/>
    </location>
</feature>
<feature type="mutagenesis site" description="Complete loss of localization to CAV1 positive caveolae." evidence="10">
    <original>K</original>
    <variation>N</variation>
    <location>
        <position position="120"/>
    </location>
</feature>
<feature type="mutagenesis site" description="Complete loss of localization to CAV1 positive caveolae." evidence="10">
    <original>F</original>
    <variation>A</variation>
    <location>
        <position position="122"/>
    </location>
</feature>
<feature type="mutagenesis site" description="No effect on caveolae targeting." evidence="10">
    <original>F</original>
    <variation>A</variation>
    <location>
        <position position="128"/>
    </location>
</feature>
<feature type="mutagenesis site" description="Distorded caveolae." evidence="10">
    <original>H</original>
    <variation>D</variation>
    <location>
        <position position="192"/>
    </location>
</feature>
<feature type="mutagenesis site" description="Distorded caveolae." evidence="10">
    <original>K</original>
    <variation>D</variation>
    <location>
        <position position="193"/>
    </location>
</feature>
<feature type="sequence conflict" description="In Ref. 1; AAF40470." evidence="13" ref="1">
    <original>C</original>
    <variation>F</variation>
    <location>
        <position position="96"/>
    </location>
</feature>
<feature type="sequence conflict" description="In Ref. 1; AAF40470." evidence="13" ref="1">
    <original>R</original>
    <variation>G</variation>
    <location>
        <position position="164"/>
    </location>
</feature>
<comment type="function">
    <text evidence="2 8 11">ATP- and membrane-binding protein that controls membrane reorganization/tubulation upon ATP hydrolysis (By similarity). Plays a role in membrane trafficking between the plasma membrane and endosomes (PubMed:17233914). Important for the internalization of GLUT4. Required for fusion of myoblasts to skeletal muscle myotubes. Required for normal translocation of FER1L5 to the plasma membrane (By similarity). Regulates the equilibrium between cell surface-associated and cell surface-dissociated caveolae by constraining caveolae at the cell membrane (PubMed:25588833).</text>
</comment>
<comment type="activity regulation">
    <text evidence="2">The very low intrinsic ATPase activity is increased upon interaction with liposomes.</text>
</comment>
<comment type="subunit">
    <text evidence="2 8 9 10 11">Homodimer and homooligomer. Interacts with EHD1. May also interact with EHD3 and EHD4 (PubMed:17233914). Interacts with MYOF (PubMed:18502764). Interacts with EHBP1. Interacts with FER1L5 (via second C2 domain) (By similarity). Interacts with CAV1 in a cholesterol-dependent manner (PubMed:25588833). Interacts (via EH domain) with PACSIN2 (via NPF motifs); this interaction probably stabilizes the caveolae (PubMed:22323287).</text>
</comment>
<comment type="subcellular location">
    <subcellularLocation>
        <location evidence="8">Cell membrane</location>
        <topology evidence="2">Peripheral membrane protein</topology>
        <orientation evidence="2">Cytoplasmic side</orientation>
    </subcellularLocation>
    <subcellularLocation>
        <location evidence="10">Membrane</location>
        <location evidence="10">Caveola</location>
        <topology evidence="2">Peripheral membrane protein</topology>
        <orientation evidence="2">Cytoplasmic side</orientation>
    </subcellularLocation>
    <subcellularLocation>
        <location evidence="1">Endosome membrane</location>
        <topology evidence="1">Peripheral membrane protein</topology>
        <orientation evidence="1">Cytoplasmic side</orientation>
    </subcellularLocation>
    <subcellularLocation>
        <location evidence="2">Cytoplasm</location>
        <location evidence="2">Cytosol</location>
    </subcellularLocation>
    <text evidence="2">Colocalizes with GLUT4 in intracellular tubulovesicular structures that are associated with cortical F-actin. Colocalizes with FER1L5 at plasma membrane in myoblasts and myotubes.</text>
</comment>
<comment type="alternative products">
    <event type="alternative splicing"/>
    <isoform>
        <id>Q9NZN4-1</id>
        <name>1</name>
        <sequence type="displayed"/>
    </isoform>
    <isoform>
        <id>Q9NZN4-2</id>
        <name>2</name>
        <sequence type="described" ref="VSP_056212"/>
    </isoform>
</comment>
<comment type="tissue specificity">
    <text evidence="7">Highly expressed in heart and moderately expressed in placenta, lung, and skeletal muscle.</text>
</comment>
<comment type="domain">
    <text evidence="10">The EH domain interacts with Asn-Pro-Phe (NPF) motifs of target proteins.</text>
</comment>
<comment type="similarity">
    <text evidence="5">Belongs to the TRAFAC class dynamin-like GTPase superfamily. Dynamin/Fzo/YdjA family. EHD subfamily.</text>
</comment>
<organism>
    <name type="scientific">Homo sapiens</name>
    <name type="common">Human</name>
    <dbReference type="NCBI Taxonomy" id="9606"/>
    <lineage>
        <taxon>Eukaryota</taxon>
        <taxon>Metazoa</taxon>
        <taxon>Chordata</taxon>
        <taxon>Craniata</taxon>
        <taxon>Vertebrata</taxon>
        <taxon>Euteleostomi</taxon>
        <taxon>Mammalia</taxon>
        <taxon>Eutheria</taxon>
        <taxon>Euarchontoglires</taxon>
        <taxon>Primates</taxon>
        <taxon>Haplorrhini</taxon>
        <taxon>Catarrhini</taxon>
        <taxon>Hominidae</taxon>
        <taxon>Homo</taxon>
    </lineage>
</organism>
<gene>
    <name evidence="14" type="primary">EHD2</name>
    <name evidence="14" type="synonym">PAST2</name>
</gene>
<name>EHD2_HUMAN</name>
<dbReference type="EMBL" id="AF181263">
    <property type="protein sequence ID" value="AAF40470.1"/>
    <property type="molecule type" value="mRNA"/>
</dbReference>
<dbReference type="EMBL" id="AF454952">
    <property type="protein sequence ID" value="AAL51078.1"/>
    <property type="molecule type" value="mRNA"/>
</dbReference>
<dbReference type="EMBL" id="AK298067">
    <property type="protein sequence ID" value="BAG60358.1"/>
    <property type="molecule type" value="mRNA"/>
</dbReference>
<dbReference type="EMBL" id="AK315548">
    <property type="protein sequence ID" value="BAG37926.1"/>
    <property type="molecule type" value="mRNA"/>
</dbReference>
<dbReference type="EMBL" id="AC008745">
    <property type="status" value="NOT_ANNOTATED_CDS"/>
    <property type="molecule type" value="Genomic_DNA"/>
</dbReference>
<dbReference type="EMBL" id="AC010519">
    <property type="status" value="NOT_ANNOTATED_CDS"/>
    <property type="molecule type" value="Genomic_DNA"/>
</dbReference>
<dbReference type="EMBL" id="CH471126">
    <property type="protein sequence ID" value="EAW57505.1"/>
    <property type="molecule type" value="Genomic_DNA"/>
</dbReference>
<dbReference type="EMBL" id="BC014445">
    <property type="protein sequence ID" value="AAH14445.1"/>
    <property type="molecule type" value="mRNA"/>
</dbReference>
<dbReference type="CCDS" id="CCDS12704.1">
    <molecule id="Q9NZN4-1"/>
</dbReference>
<dbReference type="RefSeq" id="NP_055416.2">
    <molecule id="Q9NZN4-1"/>
    <property type="nucleotide sequence ID" value="NM_014601.3"/>
</dbReference>
<dbReference type="SMR" id="Q9NZN4"/>
<dbReference type="BioGRID" id="119056">
    <property type="interactions" value="78"/>
</dbReference>
<dbReference type="FunCoup" id="Q9NZN4">
    <property type="interactions" value="1241"/>
</dbReference>
<dbReference type="IntAct" id="Q9NZN4">
    <property type="interactions" value="31"/>
</dbReference>
<dbReference type="MINT" id="Q9NZN4"/>
<dbReference type="STRING" id="9606.ENSP00000263277"/>
<dbReference type="GlyGen" id="Q9NZN4">
    <property type="glycosylation" value="1 site, 1 O-linked glycan (1 site)"/>
</dbReference>
<dbReference type="iPTMnet" id="Q9NZN4"/>
<dbReference type="MetOSite" id="Q9NZN4"/>
<dbReference type="PhosphoSitePlus" id="Q9NZN4"/>
<dbReference type="SwissPalm" id="Q9NZN4"/>
<dbReference type="BioMuta" id="EHD2"/>
<dbReference type="DMDM" id="57015322"/>
<dbReference type="CPTAC" id="CPTAC-1605"/>
<dbReference type="jPOST" id="Q9NZN4"/>
<dbReference type="MassIVE" id="Q9NZN4"/>
<dbReference type="PaxDb" id="9606-ENSP00000263277"/>
<dbReference type="PeptideAtlas" id="Q9NZN4"/>
<dbReference type="ProteomicsDB" id="4726"/>
<dbReference type="ProteomicsDB" id="83459">
    <molecule id="Q9NZN4-1"/>
</dbReference>
<dbReference type="Pumba" id="Q9NZN4"/>
<dbReference type="TopDownProteomics" id="Q9NZN4-1">
    <molecule id="Q9NZN4-1"/>
</dbReference>
<dbReference type="Antibodypedia" id="31594">
    <property type="antibodies" value="210 antibodies from 30 providers"/>
</dbReference>
<dbReference type="DNASU" id="30846"/>
<dbReference type="Ensembl" id="ENST00000263277.8">
    <molecule id="Q9NZN4-1"/>
    <property type="protein sequence ID" value="ENSP00000263277.2"/>
    <property type="gene ID" value="ENSG00000024422.12"/>
</dbReference>
<dbReference type="Ensembl" id="ENST00000538399.1">
    <molecule id="Q9NZN4-2"/>
    <property type="protein sequence ID" value="ENSP00000439036.1"/>
    <property type="gene ID" value="ENSG00000024422.12"/>
</dbReference>
<dbReference type="GeneID" id="30846"/>
<dbReference type="KEGG" id="hsa:30846"/>
<dbReference type="MANE-Select" id="ENST00000263277.8">
    <property type="protein sequence ID" value="ENSP00000263277.2"/>
    <property type="RefSeq nucleotide sequence ID" value="NM_014601.4"/>
    <property type="RefSeq protein sequence ID" value="NP_055416.2"/>
</dbReference>
<dbReference type="UCSC" id="uc002phj.5">
    <molecule id="Q9NZN4-1"/>
    <property type="organism name" value="human"/>
</dbReference>
<dbReference type="AGR" id="HGNC:3243"/>
<dbReference type="CTD" id="30846"/>
<dbReference type="DisGeNET" id="30846"/>
<dbReference type="GeneCards" id="EHD2"/>
<dbReference type="HGNC" id="HGNC:3243">
    <property type="gene designation" value="EHD2"/>
</dbReference>
<dbReference type="HPA" id="ENSG00000024422">
    <property type="expression patterns" value="Low tissue specificity"/>
</dbReference>
<dbReference type="MIM" id="605890">
    <property type="type" value="gene"/>
</dbReference>
<dbReference type="neXtProt" id="NX_Q9NZN4"/>
<dbReference type="OpenTargets" id="ENSG00000024422"/>
<dbReference type="PharmGKB" id="PA27678"/>
<dbReference type="VEuPathDB" id="HostDB:ENSG00000024422"/>
<dbReference type="eggNOG" id="KOG1954">
    <property type="taxonomic scope" value="Eukaryota"/>
</dbReference>
<dbReference type="GeneTree" id="ENSGT00940000159256"/>
<dbReference type="HOGENOM" id="CLU_017595_1_1_1"/>
<dbReference type="InParanoid" id="Q9NZN4"/>
<dbReference type="OMA" id="CAQIPNQ"/>
<dbReference type="OrthoDB" id="1716625at2759"/>
<dbReference type="PAN-GO" id="Q9NZN4">
    <property type="GO annotations" value="10 GO annotations based on evolutionary models"/>
</dbReference>
<dbReference type="PhylomeDB" id="Q9NZN4"/>
<dbReference type="TreeFam" id="TF314429"/>
<dbReference type="PathwayCommons" id="Q9NZN4"/>
<dbReference type="Reactome" id="R-HSA-983231">
    <property type="pathway name" value="Factors involved in megakaryocyte development and platelet production"/>
</dbReference>
<dbReference type="SignaLink" id="Q9NZN4"/>
<dbReference type="BioGRID-ORCS" id="30846">
    <property type="hits" value="15 hits in 1174 CRISPR screens"/>
</dbReference>
<dbReference type="CD-CODE" id="91857CE7">
    <property type="entry name" value="Nucleolus"/>
</dbReference>
<dbReference type="ChiTaRS" id="EHD2">
    <property type="organism name" value="human"/>
</dbReference>
<dbReference type="GeneWiki" id="EHD2"/>
<dbReference type="GenomeRNAi" id="30846"/>
<dbReference type="Pharos" id="Q9NZN4">
    <property type="development level" value="Tbio"/>
</dbReference>
<dbReference type="PRO" id="PR:Q9NZN4"/>
<dbReference type="Proteomes" id="UP000005640">
    <property type="component" value="Chromosome 19"/>
</dbReference>
<dbReference type="RNAct" id="Q9NZN4">
    <property type="molecule type" value="protein"/>
</dbReference>
<dbReference type="Bgee" id="ENSG00000024422">
    <property type="expression patterns" value="Expressed in stromal cell of endometrium and 180 other cell types or tissues"/>
</dbReference>
<dbReference type="ExpressionAtlas" id="Q9NZN4">
    <property type="expression patterns" value="baseline and differential"/>
</dbReference>
<dbReference type="GO" id="GO:0005901">
    <property type="term" value="C:caveola"/>
    <property type="evidence" value="ECO:0000314"/>
    <property type="project" value="MGI"/>
</dbReference>
<dbReference type="GO" id="GO:0005737">
    <property type="term" value="C:cytoplasm"/>
    <property type="evidence" value="ECO:0000318"/>
    <property type="project" value="GO_Central"/>
</dbReference>
<dbReference type="GO" id="GO:0005829">
    <property type="term" value="C:cytosol"/>
    <property type="evidence" value="ECO:0000250"/>
    <property type="project" value="UniProtKB"/>
</dbReference>
<dbReference type="GO" id="GO:0005769">
    <property type="term" value="C:early endosome"/>
    <property type="evidence" value="ECO:0000318"/>
    <property type="project" value="GO_Central"/>
</dbReference>
<dbReference type="GO" id="GO:0030139">
    <property type="term" value="C:endocytic vesicle"/>
    <property type="evidence" value="ECO:0000318"/>
    <property type="project" value="GO_Central"/>
</dbReference>
<dbReference type="GO" id="GO:0010008">
    <property type="term" value="C:endosome membrane"/>
    <property type="evidence" value="ECO:0000304"/>
    <property type="project" value="Reactome"/>
</dbReference>
<dbReference type="GO" id="GO:0070062">
    <property type="term" value="C:extracellular exosome"/>
    <property type="evidence" value="ECO:0007005"/>
    <property type="project" value="UniProtKB"/>
</dbReference>
<dbReference type="GO" id="GO:0016020">
    <property type="term" value="C:membrane"/>
    <property type="evidence" value="ECO:0000250"/>
    <property type="project" value="UniProtKB"/>
</dbReference>
<dbReference type="GO" id="GO:0005634">
    <property type="term" value="C:nucleus"/>
    <property type="evidence" value="ECO:0000304"/>
    <property type="project" value="ProtInc"/>
</dbReference>
<dbReference type="GO" id="GO:0048471">
    <property type="term" value="C:perinuclear region of cytoplasm"/>
    <property type="evidence" value="ECO:0000318"/>
    <property type="project" value="GO_Central"/>
</dbReference>
<dbReference type="GO" id="GO:0005886">
    <property type="term" value="C:plasma membrane"/>
    <property type="evidence" value="ECO:0000250"/>
    <property type="project" value="UniProtKB"/>
</dbReference>
<dbReference type="GO" id="GO:0055038">
    <property type="term" value="C:recycling endosome membrane"/>
    <property type="evidence" value="ECO:0000314"/>
    <property type="project" value="UniProtKB"/>
</dbReference>
<dbReference type="GO" id="GO:0005524">
    <property type="term" value="F:ATP binding"/>
    <property type="evidence" value="ECO:0007669"/>
    <property type="project" value="UniProtKB-KW"/>
</dbReference>
<dbReference type="GO" id="GO:0005509">
    <property type="term" value="F:calcium ion binding"/>
    <property type="evidence" value="ECO:0007669"/>
    <property type="project" value="InterPro"/>
</dbReference>
<dbReference type="GO" id="GO:0005525">
    <property type="term" value="F:GTP binding"/>
    <property type="evidence" value="ECO:0007669"/>
    <property type="project" value="InterPro"/>
</dbReference>
<dbReference type="GO" id="GO:0016787">
    <property type="term" value="F:hydrolase activity"/>
    <property type="evidence" value="ECO:0007669"/>
    <property type="project" value="UniProtKB-KW"/>
</dbReference>
<dbReference type="GO" id="GO:0042802">
    <property type="term" value="F:identical protein binding"/>
    <property type="evidence" value="ECO:0007669"/>
    <property type="project" value="Ensembl"/>
</dbReference>
<dbReference type="GO" id="GO:0003676">
    <property type="term" value="F:nucleic acid binding"/>
    <property type="evidence" value="ECO:0000304"/>
    <property type="project" value="ProtInc"/>
</dbReference>
<dbReference type="GO" id="GO:0019904">
    <property type="term" value="F:protein domain specific binding"/>
    <property type="evidence" value="ECO:0007669"/>
    <property type="project" value="Ensembl"/>
</dbReference>
<dbReference type="GO" id="GO:0060271">
    <property type="term" value="P:cilium assembly"/>
    <property type="evidence" value="ECO:0000318"/>
    <property type="project" value="GO_Central"/>
</dbReference>
<dbReference type="GO" id="GO:0030866">
    <property type="term" value="P:cortical actin cytoskeleton organization"/>
    <property type="evidence" value="ECO:0007669"/>
    <property type="project" value="Ensembl"/>
</dbReference>
<dbReference type="GO" id="GO:0032456">
    <property type="term" value="P:endocytic recycling"/>
    <property type="evidence" value="ECO:0000316"/>
    <property type="project" value="UniProtKB"/>
</dbReference>
<dbReference type="GO" id="GO:0006897">
    <property type="term" value="P:endocytosis"/>
    <property type="evidence" value="ECO:0000318"/>
    <property type="project" value="GO_Central"/>
</dbReference>
<dbReference type="GO" id="GO:0097320">
    <property type="term" value="P:plasma membrane tubulation"/>
    <property type="evidence" value="ECO:0000250"/>
    <property type="project" value="UniProtKB"/>
</dbReference>
<dbReference type="GO" id="GO:2001137">
    <property type="term" value="P:positive regulation of endocytic recycling"/>
    <property type="evidence" value="ECO:0000250"/>
    <property type="project" value="UniProtKB"/>
</dbReference>
<dbReference type="GO" id="GO:1901741">
    <property type="term" value="P:positive regulation of myoblast fusion"/>
    <property type="evidence" value="ECO:0000250"/>
    <property type="project" value="UniProtKB"/>
</dbReference>
<dbReference type="GO" id="GO:0072659">
    <property type="term" value="P:protein localization to plasma membrane"/>
    <property type="evidence" value="ECO:0000250"/>
    <property type="project" value="UniProtKB"/>
</dbReference>
<dbReference type="CDD" id="cd00052">
    <property type="entry name" value="EH"/>
    <property type="match status" value="1"/>
</dbReference>
<dbReference type="CDD" id="cd09913">
    <property type="entry name" value="EHD"/>
    <property type="match status" value="1"/>
</dbReference>
<dbReference type="FunFam" id="3.40.50.300:FF:000147">
    <property type="entry name" value="EH domain-containing protein 1"/>
    <property type="match status" value="1"/>
</dbReference>
<dbReference type="FunFam" id="1.10.238.10:FF:000038">
    <property type="entry name" value="EH domain-containing protein 3"/>
    <property type="match status" value="1"/>
</dbReference>
<dbReference type="Gene3D" id="1.10.268.20">
    <property type="match status" value="1"/>
</dbReference>
<dbReference type="Gene3D" id="1.10.238.10">
    <property type="entry name" value="EF-hand"/>
    <property type="match status" value="1"/>
</dbReference>
<dbReference type="Gene3D" id="3.40.50.300">
    <property type="entry name" value="P-loop containing nucleotide triphosphate hydrolases"/>
    <property type="match status" value="1"/>
</dbReference>
<dbReference type="InterPro" id="IPR040990">
    <property type="entry name" value="DUF5600"/>
</dbReference>
<dbReference type="InterPro" id="IPR045063">
    <property type="entry name" value="Dynamin_N"/>
</dbReference>
<dbReference type="InterPro" id="IPR011992">
    <property type="entry name" value="EF-hand-dom_pair"/>
</dbReference>
<dbReference type="InterPro" id="IPR018247">
    <property type="entry name" value="EF_Hand_1_Ca_BS"/>
</dbReference>
<dbReference type="InterPro" id="IPR002048">
    <property type="entry name" value="EF_hand_dom"/>
</dbReference>
<dbReference type="InterPro" id="IPR000261">
    <property type="entry name" value="EH_dom"/>
</dbReference>
<dbReference type="InterPro" id="IPR031692">
    <property type="entry name" value="EHD_N"/>
</dbReference>
<dbReference type="InterPro" id="IPR030381">
    <property type="entry name" value="G_DYNAMIN_dom"/>
</dbReference>
<dbReference type="InterPro" id="IPR027417">
    <property type="entry name" value="P-loop_NTPase"/>
</dbReference>
<dbReference type="PANTHER" id="PTHR11216">
    <property type="entry name" value="EH DOMAIN"/>
    <property type="match status" value="1"/>
</dbReference>
<dbReference type="Pfam" id="PF18150">
    <property type="entry name" value="DUF5600"/>
    <property type="match status" value="1"/>
</dbReference>
<dbReference type="Pfam" id="PF00350">
    <property type="entry name" value="Dynamin_N"/>
    <property type="match status" value="1"/>
</dbReference>
<dbReference type="Pfam" id="PF12763">
    <property type="entry name" value="EH"/>
    <property type="match status" value="1"/>
</dbReference>
<dbReference type="Pfam" id="PF16880">
    <property type="entry name" value="EHD_N"/>
    <property type="match status" value="1"/>
</dbReference>
<dbReference type="SMART" id="SM00027">
    <property type="entry name" value="EH"/>
    <property type="match status" value="1"/>
</dbReference>
<dbReference type="SUPFAM" id="SSF47473">
    <property type="entry name" value="EF-hand"/>
    <property type="match status" value="1"/>
</dbReference>
<dbReference type="SUPFAM" id="SSF52540">
    <property type="entry name" value="P-loop containing nucleoside triphosphate hydrolases"/>
    <property type="match status" value="1"/>
</dbReference>
<dbReference type="PROSITE" id="PS00018">
    <property type="entry name" value="EF_HAND_1"/>
    <property type="match status" value="1"/>
</dbReference>
<dbReference type="PROSITE" id="PS50222">
    <property type="entry name" value="EF_HAND_2"/>
    <property type="match status" value="1"/>
</dbReference>
<dbReference type="PROSITE" id="PS50031">
    <property type="entry name" value="EH"/>
    <property type="match status" value="1"/>
</dbReference>
<dbReference type="PROSITE" id="PS51718">
    <property type="entry name" value="G_DYNAMIN_2"/>
    <property type="match status" value="1"/>
</dbReference>
<sequence>MFSWLKRGGARGQQPEAIRTVTSALKELYRTKLLPLEEHYRFGAFHSPALEDADFDGKPMVLVAGQYSTGKTSFIQYLLEQEVPGSRVGPEPTTDCFVAVMHGDTEGTVPGNALVVDPDKPFRKLNPFGNTFLNRFMCAQLPNQVLESISIIDTPGILSGAKQRVSRGYDFPAVLRWFAERVDLIILLFDAHKLEISDEFSEAIGALRGHEDKIRVVLNKADMVETQQLMRVYGALMWALGKVVGTPEVLRVYIGSFWSQPLLVPDNRRLFELEEQDLFRDIQGLPRHAALRKLNDLVKRARLVRVHAYIISYLKKEMPSVFGKENKKKQLILKLPVIFAKIQLEHHISPGDFPDCQKMQELLMAHDFTKFHSLKPKLLEALDEMLTHDIAKLMPLLRQEELESTEVGVQGGAFEGTHMGPFVERGPDEAMEDGEEGSDDEAEWVVTKDKSKYDEIFYNLAPADGKLSGSKAKTWMVGTKLPNSVLGRIWKLSDVDRDGMLDDEEFALASHLIEAKLEGHGLPANLPRRLVPPSKRRHKGSAE</sequence>
<proteinExistence type="evidence at protein level"/>
<keyword id="KW-0025">Alternative splicing</keyword>
<keyword id="KW-0067">ATP-binding</keyword>
<keyword id="KW-0106">Calcium</keyword>
<keyword id="KW-1003">Cell membrane</keyword>
<keyword id="KW-0963">Cytoplasm</keyword>
<keyword id="KW-0903">Direct protein sequencing</keyword>
<keyword id="KW-0967">Endosome</keyword>
<keyword id="KW-0378">Hydrolase</keyword>
<keyword id="KW-0472">Membrane</keyword>
<keyword id="KW-0479">Metal-binding</keyword>
<keyword id="KW-0547">Nucleotide-binding</keyword>
<keyword id="KW-0597">Phosphoprotein</keyword>
<keyword id="KW-1267">Proteomics identification</keyword>
<keyword id="KW-1185">Reference proteome</keyword>
<evidence type="ECO:0000250" key="1">
    <source>
        <dbReference type="UniProtKB" id="Q4V8H8"/>
    </source>
</evidence>
<evidence type="ECO:0000250" key="2">
    <source>
        <dbReference type="UniProtKB" id="Q8BH64"/>
    </source>
</evidence>
<evidence type="ECO:0000255" key="3">
    <source>
        <dbReference type="PROSITE-ProRule" id="PRU00077"/>
    </source>
</evidence>
<evidence type="ECO:0000255" key="4">
    <source>
        <dbReference type="PROSITE-ProRule" id="PRU00448"/>
    </source>
</evidence>
<evidence type="ECO:0000255" key="5">
    <source>
        <dbReference type="PROSITE-ProRule" id="PRU01055"/>
    </source>
</evidence>
<evidence type="ECO:0000256" key="6">
    <source>
        <dbReference type="SAM" id="MobiDB-lite"/>
    </source>
</evidence>
<evidence type="ECO:0000269" key="7">
    <source>
    </source>
</evidence>
<evidence type="ECO:0000269" key="8">
    <source>
    </source>
</evidence>
<evidence type="ECO:0000269" key="9">
    <source>
    </source>
</evidence>
<evidence type="ECO:0000269" key="10">
    <source>
    </source>
</evidence>
<evidence type="ECO:0000269" key="11">
    <source>
    </source>
</evidence>
<evidence type="ECO:0000303" key="12">
    <source>
    </source>
</evidence>
<evidence type="ECO:0000305" key="13"/>
<evidence type="ECO:0000312" key="14">
    <source>
        <dbReference type="HGNC" id="HGNC:3243"/>
    </source>
</evidence>
<evidence type="ECO:0007744" key="15">
    <source>
    </source>
</evidence>
<evidence type="ECO:0007744" key="16">
    <source>
    </source>
</evidence>
<evidence type="ECO:0007744" key="17">
    <source>
    </source>
</evidence>
<evidence type="ECO:0007744" key="18">
    <source>
    </source>
</evidence>
<evidence type="ECO:0007744" key="19">
    <source>
    </source>
</evidence>
<protein>
    <recommendedName>
        <fullName evidence="13">EH domain-containing protein 2</fullName>
    </recommendedName>
    <alternativeName>
        <fullName evidence="13">PAST homolog 2</fullName>
    </alternativeName>
</protein>
<accession>Q9NZN4</accession>
<accession>B2RDH9</accession>
<accession>B4DNU6</accession>
<accession>Q96CB6</accession>